<proteinExistence type="evidence at protein level"/>
<organism>
    <name type="scientific">Arabidopsis thaliana</name>
    <name type="common">Mouse-ear cress</name>
    <dbReference type="NCBI Taxonomy" id="3702"/>
    <lineage>
        <taxon>Eukaryota</taxon>
        <taxon>Viridiplantae</taxon>
        <taxon>Streptophyta</taxon>
        <taxon>Embryophyta</taxon>
        <taxon>Tracheophyta</taxon>
        <taxon>Spermatophyta</taxon>
        <taxon>Magnoliopsida</taxon>
        <taxon>eudicotyledons</taxon>
        <taxon>Gunneridae</taxon>
        <taxon>Pentapetalae</taxon>
        <taxon>rosids</taxon>
        <taxon>malvids</taxon>
        <taxon>Brassicales</taxon>
        <taxon>Brassicaceae</taxon>
        <taxon>Camelineae</taxon>
        <taxon>Arabidopsis</taxon>
    </lineage>
</organism>
<gene>
    <name type="primary">SKIP17</name>
    <name type="ordered locus">At4g02740</name>
    <name type="ORF">T5J8.4</name>
</gene>
<protein>
    <recommendedName>
        <fullName>F-box protein SKIP17</fullName>
    </recommendedName>
    <alternativeName>
        <fullName>SKP1-interacting partner 17</fullName>
    </alternativeName>
</protein>
<name>SKI17_ARATH</name>
<feature type="chain" id="PRO_0000283487" description="F-box protein SKIP17">
    <location>
        <begin position="1"/>
        <end position="479"/>
    </location>
</feature>
<feature type="domain" description="F-box">
    <location>
        <begin position="92"/>
        <end position="138"/>
    </location>
</feature>
<feature type="region of interest" description="Disordered" evidence="2">
    <location>
        <begin position="435"/>
        <end position="479"/>
    </location>
</feature>
<feature type="compositionally biased region" description="Acidic residues" evidence="2">
    <location>
        <begin position="437"/>
        <end position="469"/>
    </location>
</feature>
<feature type="sequence conflict" description="In Ref. 3; BAD42970." evidence="4" ref="3">
    <original>F</original>
    <variation>L</variation>
    <location>
        <position position="280"/>
    </location>
</feature>
<accession>Q0WRC9</accession>
<accession>Q683B0</accession>
<accession>Q9SY01</accession>
<evidence type="ECO:0000250" key="1"/>
<evidence type="ECO:0000256" key="2">
    <source>
        <dbReference type="SAM" id="MobiDB-lite"/>
    </source>
</evidence>
<evidence type="ECO:0000269" key="3">
    <source>
    </source>
</evidence>
<evidence type="ECO:0000305" key="4"/>
<comment type="function">
    <text evidence="1">Component of SCF(ASK-cullin-F-box) E3 ubiquitin ligase complexes, which may mediate the ubiquitination and subsequent proteasomal degradation of target proteins.</text>
</comment>
<comment type="pathway">
    <text>Protein modification; protein ubiquitination.</text>
</comment>
<comment type="subunit">
    <text evidence="1 3">Part of a SCF (ASK-cullin-F-box) protein ligase complex (By similarity). Interacts with SPK1B/ASK2.</text>
</comment>
<comment type="interaction">
    <interactant intactId="EBI-604757">
        <id>Q0WRC9</id>
    </interactant>
    <interactant intactId="EBI-604076">
        <id>Q9FHW7</id>
        <label>SKP1B</label>
    </interactant>
    <organismsDiffer>false</organismsDiffer>
    <experiments>3</experiments>
</comment>
<comment type="subcellular location">
    <subcellularLocation>
        <location evidence="1">Nucleus</location>
    </subcellularLocation>
</comment>
<comment type="domain">
    <text evidence="1">The F-box is necessary for the interaction with ASK proteins.</text>
</comment>
<comment type="sequence caution" evidence="4">
    <conflict type="erroneous gene model prediction">
        <sequence resource="EMBL-CDS" id="AAD15349"/>
    </conflict>
</comment>
<comment type="sequence caution" evidence="4">
    <conflict type="erroneous gene model prediction">
        <sequence resource="EMBL-CDS" id="CAB77759"/>
    </conflict>
</comment>
<dbReference type="EMBL" id="AC004044">
    <property type="protein sequence ID" value="AAD15349.1"/>
    <property type="status" value="ALT_SEQ"/>
    <property type="molecule type" value="Genomic_DNA"/>
</dbReference>
<dbReference type="EMBL" id="AL161495">
    <property type="protein sequence ID" value="CAB77759.1"/>
    <property type="status" value="ALT_SEQ"/>
    <property type="molecule type" value="Genomic_DNA"/>
</dbReference>
<dbReference type="EMBL" id="CP002687">
    <property type="protein sequence ID" value="AEE82223.1"/>
    <property type="molecule type" value="Genomic_DNA"/>
</dbReference>
<dbReference type="EMBL" id="AK175207">
    <property type="protein sequence ID" value="BAD42970.1"/>
    <property type="molecule type" value="mRNA"/>
</dbReference>
<dbReference type="EMBL" id="AK228382">
    <property type="protein sequence ID" value="BAF00320.1"/>
    <property type="molecule type" value="mRNA"/>
</dbReference>
<dbReference type="PIR" id="H85034">
    <property type="entry name" value="H85034"/>
</dbReference>
<dbReference type="RefSeq" id="NP_192183.2">
    <property type="nucleotide sequence ID" value="NM_116508.4"/>
</dbReference>
<dbReference type="SMR" id="Q0WRC9"/>
<dbReference type="BioGRID" id="13477">
    <property type="interactions" value="10"/>
</dbReference>
<dbReference type="FunCoup" id="Q0WRC9">
    <property type="interactions" value="713"/>
</dbReference>
<dbReference type="IntAct" id="Q0WRC9">
    <property type="interactions" value="7"/>
</dbReference>
<dbReference type="STRING" id="3702.Q0WRC9"/>
<dbReference type="PaxDb" id="3702-AT4G02740.1"/>
<dbReference type="ProteomicsDB" id="232589"/>
<dbReference type="EnsemblPlants" id="AT4G02740.1">
    <property type="protein sequence ID" value="AT4G02740.1"/>
    <property type="gene ID" value="AT4G02740"/>
</dbReference>
<dbReference type="GeneID" id="828188"/>
<dbReference type="Gramene" id="AT4G02740.1">
    <property type="protein sequence ID" value="AT4G02740.1"/>
    <property type="gene ID" value="AT4G02740"/>
</dbReference>
<dbReference type="KEGG" id="ath:AT4G02740"/>
<dbReference type="Araport" id="AT4G02740"/>
<dbReference type="TAIR" id="AT4G02740"/>
<dbReference type="eggNOG" id="KOG4341">
    <property type="taxonomic scope" value="Eukaryota"/>
</dbReference>
<dbReference type="HOGENOM" id="CLU_027914_0_0_1"/>
<dbReference type="InParanoid" id="Q0WRC9"/>
<dbReference type="PhylomeDB" id="Q0WRC9"/>
<dbReference type="UniPathway" id="UPA00143"/>
<dbReference type="PRO" id="PR:Q0WRC9"/>
<dbReference type="Proteomes" id="UP000006548">
    <property type="component" value="Chromosome 4"/>
</dbReference>
<dbReference type="ExpressionAtlas" id="Q0WRC9">
    <property type="expression patterns" value="baseline and differential"/>
</dbReference>
<dbReference type="GO" id="GO:0005634">
    <property type="term" value="C:nucleus"/>
    <property type="evidence" value="ECO:0007669"/>
    <property type="project" value="UniProtKB-SubCell"/>
</dbReference>
<dbReference type="GO" id="GO:0016567">
    <property type="term" value="P:protein ubiquitination"/>
    <property type="evidence" value="ECO:0007669"/>
    <property type="project" value="UniProtKB-UniPathway"/>
</dbReference>
<dbReference type="FunFam" id="3.80.10.10:FF:001467">
    <property type="entry name" value="F-box protein SKIP17"/>
    <property type="match status" value="1"/>
</dbReference>
<dbReference type="FunFam" id="3.80.10.10:FF:001821">
    <property type="entry name" value="F-box protein SKIP17"/>
    <property type="match status" value="1"/>
</dbReference>
<dbReference type="Gene3D" id="3.80.10.10">
    <property type="entry name" value="Ribonuclease Inhibitor"/>
    <property type="match status" value="2"/>
</dbReference>
<dbReference type="InterPro" id="IPR036047">
    <property type="entry name" value="F-box-like_dom_sf"/>
</dbReference>
<dbReference type="InterPro" id="IPR001810">
    <property type="entry name" value="F-box_dom"/>
</dbReference>
<dbReference type="InterPro" id="IPR006553">
    <property type="entry name" value="Leu-rich_rpt_Cys-con_subtyp"/>
</dbReference>
<dbReference type="InterPro" id="IPR032675">
    <property type="entry name" value="LRR_dom_sf"/>
</dbReference>
<dbReference type="PANTHER" id="PTHR38926">
    <property type="entry name" value="F-BOX DOMAIN CONTAINING PROTEIN, EXPRESSED"/>
    <property type="match status" value="1"/>
</dbReference>
<dbReference type="PANTHER" id="PTHR38926:SF2">
    <property type="entry name" value="F-BOX_LRR-REPEAT PROTEIN 21-RELATED"/>
    <property type="match status" value="1"/>
</dbReference>
<dbReference type="Pfam" id="PF12937">
    <property type="entry name" value="F-box-like"/>
    <property type="match status" value="1"/>
</dbReference>
<dbReference type="SMART" id="SM00367">
    <property type="entry name" value="LRR_CC"/>
    <property type="match status" value="4"/>
</dbReference>
<dbReference type="SUPFAM" id="SSF81383">
    <property type="entry name" value="F-box domain"/>
    <property type="match status" value="1"/>
</dbReference>
<dbReference type="SUPFAM" id="SSF52047">
    <property type="entry name" value="RNI-like"/>
    <property type="match status" value="1"/>
</dbReference>
<keyword id="KW-0539">Nucleus</keyword>
<keyword id="KW-1185">Reference proteome</keyword>
<keyword id="KW-0833">Ubl conjugation pathway</keyword>
<reference key="1">
    <citation type="journal article" date="1999" name="Nature">
        <title>Sequence and analysis of chromosome 4 of the plant Arabidopsis thaliana.</title>
        <authorList>
            <person name="Mayer K.F.X."/>
            <person name="Schueller C."/>
            <person name="Wambutt R."/>
            <person name="Murphy G."/>
            <person name="Volckaert G."/>
            <person name="Pohl T."/>
            <person name="Duesterhoeft A."/>
            <person name="Stiekema W."/>
            <person name="Entian K.-D."/>
            <person name="Terryn N."/>
            <person name="Harris B."/>
            <person name="Ansorge W."/>
            <person name="Brandt P."/>
            <person name="Grivell L.A."/>
            <person name="Rieger M."/>
            <person name="Weichselgartner M."/>
            <person name="de Simone V."/>
            <person name="Obermaier B."/>
            <person name="Mache R."/>
            <person name="Mueller M."/>
            <person name="Kreis M."/>
            <person name="Delseny M."/>
            <person name="Puigdomenech P."/>
            <person name="Watson M."/>
            <person name="Schmidtheini T."/>
            <person name="Reichert B."/>
            <person name="Portetelle D."/>
            <person name="Perez-Alonso M."/>
            <person name="Boutry M."/>
            <person name="Bancroft I."/>
            <person name="Vos P."/>
            <person name="Hoheisel J."/>
            <person name="Zimmermann W."/>
            <person name="Wedler H."/>
            <person name="Ridley P."/>
            <person name="Langham S.-A."/>
            <person name="McCullagh B."/>
            <person name="Bilham L."/>
            <person name="Robben J."/>
            <person name="van der Schueren J."/>
            <person name="Grymonprez B."/>
            <person name="Chuang Y.-J."/>
            <person name="Vandenbussche F."/>
            <person name="Braeken M."/>
            <person name="Weltjens I."/>
            <person name="Voet M."/>
            <person name="Bastiaens I."/>
            <person name="Aert R."/>
            <person name="Defoor E."/>
            <person name="Weitzenegger T."/>
            <person name="Bothe G."/>
            <person name="Ramsperger U."/>
            <person name="Hilbert H."/>
            <person name="Braun M."/>
            <person name="Holzer E."/>
            <person name="Brandt A."/>
            <person name="Peters S."/>
            <person name="van Staveren M."/>
            <person name="Dirkse W."/>
            <person name="Mooijman P."/>
            <person name="Klein Lankhorst R."/>
            <person name="Rose M."/>
            <person name="Hauf J."/>
            <person name="Koetter P."/>
            <person name="Berneiser S."/>
            <person name="Hempel S."/>
            <person name="Feldpausch M."/>
            <person name="Lamberth S."/>
            <person name="Van den Daele H."/>
            <person name="De Keyser A."/>
            <person name="Buysshaert C."/>
            <person name="Gielen J."/>
            <person name="Villarroel R."/>
            <person name="De Clercq R."/>
            <person name="van Montagu M."/>
            <person name="Rogers J."/>
            <person name="Cronin A."/>
            <person name="Quail M.A."/>
            <person name="Bray-Allen S."/>
            <person name="Clark L."/>
            <person name="Doggett J."/>
            <person name="Hall S."/>
            <person name="Kay M."/>
            <person name="Lennard N."/>
            <person name="McLay K."/>
            <person name="Mayes R."/>
            <person name="Pettett A."/>
            <person name="Rajandream M.A."/>
            <person name="Lyne M."/>
            <person name="Benes V."/>
            <person name="Rechmann S."/>
            <person name="Borkova D."/>
            <person name="Bloecker H."/>
            <person name="Scharfe M."/>
            <person name="Grimm M."/>
            <person name="Loehnert T.-H."/>
            <person name="Dose S."/>
            <person name="de Haan M."/>
            <person name="Maarse A.C."/>
            <person name="Schaefer M."/>
            <person name="Mueller-Auer S."/>
            <person name="Gabel C."/>
            <person name="Fuchs M."/>
            <person name="Fartmann B."/>
            <person name="Granderath K."/>
            <person name="Dauner D."/>
            <person name="Herzl A."/>
            <person name="Neumann S."/>
            <person name="Argiriou A."/>
            <person name="Vitale D."/>
            <person name="Liguori R."/>
            <person name="Piravandi E."/>
            <person name="Massenet O."/>
            <person name="Quigley F."/>
            <person name="Clabauld G."/>
            <person name="Muendlein A."/>
            <person name="Felber R."/>
            <person name="Schnabl S."/>
            <person name="Hiller R."/>
            <person name="Schmidt W."/>
            <person name="Lecharny A."/>
            <person name="Aubourg S."/>
            <person name="Chefdor F."/>
            <person name="Cooke R."/>
            <person name="Berger C."/>
            <person name="Monfort A."/>
            <person name="Casacuberta E."/>
            <person name="Gibbons T."/>
            <person name="Weber N."/>
            <person name="Vandenbol M."/>
            <person name="Bargues M."/>
            <person name="Terol J."/>
            <person name="Torres A."/>
            <person name="Perez-Perez A."/>
            <person name="Purnelle B."/>
            <person name="Bent E."/>
            <person name="Johnson S."/>
            <person name="Tacon D."/>
            <person name="Jesse T."/>
            <person name="Heijnen L."/>
            <person name="Schwarz S."/>
            <person name="Scholler P."/>
            <person name="Heber S."/>
            <person name="Francs P."/>
            <person name="Bielke C."/>
            <person name="Frishman D."/>
            <person name="Haase D."/>
            <person name="Lemcke K."/>
            <person name="Mewes H.-W."/>
            <person name="Stocker S."/>
            <person name="Zaccaria P."/>
            <person name="Bevan M."/>
            <person name="Wilson R.K."/>
            <person name="de la Bastide M."/>
            <person name="Habermann K."/>
            <person name="Parnell L."/>
            <person name="Dedhia N."/>
            <person name="Gnoj L."/>
            <person name="Schutz K."/>
            <person name="Huang E."/>
            <person name="Spiegel L."/>
            <person name="Sekhon M."/>
            <person name="Murray J."/>
            <person name="Sheet P."/>
            <person name="Cordes M."/>
            <person name="Abu-Threideh J."/>
            <person name="Stoneking T."/>
            <person name="Kalicki J."/>
            <person name="Graves T."/>
            <person name="Harmon G."/>
            <person name="Edwards J."/>
            <person name="Latreille P."/>
            <person name="Courtney L."/>
            <person name="Cloud J."/>
            <person name="Abbott A."/>
            <person name="Scott K."/>
            <person name="Johnson D."/>
            <person name="Minx P."/>
            <person name="Bentley D."/>
            <person name="Fulton B."/>
            <person name="Miller N."/>
            <person name="Greco T."/>
            <person name="Kemp K."/>
            <person name="Kramer J."/>
            <person name="Fulton L."/>
            <person name="Mardis E."/>
            <person name="Dante M."/>
            <person name="Pepin K."/>
            <person name="Hillier L.W."/>
            <person name="Nelson J."/>
            <person name="Spieth J."/>
            <person name="Ryan E."/>
            <person name="Andrews S."/>
            <person name="Geisel C."/>
            <person name="Layman D."/>
            <person name="Du H."/>
            <person name="Ali J."/>
            <person name="Berghoff A."/>
            <person name="Jones K."/>
            <person name="Drone K."/>
            <person name="Cotton M."/>
            <person name="Joshu C."/>
            <person name="Antonoiu B."/>
            <person name="Zidanic M."/>
            <person name="Strong C."/>
            <person name="Sun H."/>
            <person name="Lamar B."/>
            <person name="Yordan C."/>
            <person name="Ma P."/>
            <person name="Zhong J."/>
            <person name="Preston R."/>
            <person name="Vil D."/>
            <person name="Shekher M."/>
            <person name="Matero A."/>
            <person name="Shah R."/>
            <person name="Swaby I.K."/>
            <person name="O'Shaughnessy A."/>
            <person name="Rodriguez M."/>
            <person name="Hoffman J."/>
            <person name="Till S."/>
            <person name="Granat S."/>
            <person name="Shohdy N."/>
            <person name="Hasegawa A."/>
            <person name="Hameed A."/>
            <person name="Lodhi M."/>
            <person name="Johnson A."/>
            <person name="Chen E."/>
            <person name="Marra M.A."/>
            <person name="Martienssen R."/>
            <person name="McCombie W.R."/>
        </authorList>
    </citation>
    <scope>NUCLEOTIDE SEQUENCE [LARGE SCALE GENOMIC DNA]</scope>
    <source>
        <strain>cv. Columbia</strain>
    </source>
</reference>
<reference key="2">
    <citation type="journal article" date="2017" name="Plant J.">
        <title>Araport11: a complete reannotation of the Arabidopsis thaliana reference genome.</title>
        <authorList>
            <person name="Cheng C.Y."/>
            <person name="Krishnakumar V."/>
            <person name="Chan A.P."/>
            <person name="Thibaud-Nissen F."/>
            <person name="Schobel S."/>
            <person name="Town C.D."/>
        </authorList>
    </citation>
    <scope>GENOME REANNOTATION</scope>
    <source>
        <strain>cv. Columbia</strain>
    </source>
</reference>
<reference key="3">
    <citation type="submission" date="2006-07" db="EMBL/GenBank/DDBJ databases">
        <title>Large-scale analysis of RIKEN Arabidopsis full-length (RAFL) cDNAs.</title>
        <authorList>
            <person name="Totoki Y."/>
            <person name="Seki M."/>
            <person name="Ishida J."/>
            <person name="Nakajima M."/>
            <person name="Enju A."/>
            <person name="Kamiya A."/>
            <person name="Narusaka M."/>
            <person name="Shin-i T."/>
            <person name="Nakagawa M."/>
            <person name="Sakamoto N."/>
            <person name="Oishi K."/>
            <person name="Kohara Y."/>
            <person name="Kobayashi M."/>
            <person name="Toyoda A."/>
            <person name="Sakaki Y."/>
            <person name="Sakurai T."/>
            <person name="Iida K."/>
            <person name="Akiyama K."/>
            <person name="Satou M."/>
            <person name="Toyoda T."/>
            <person name="Konagaya A."/>
            <person name="Carninci P."/>
            <person name="Kawai J."/>
            <person name="Hayashizaki Y."/>
            <person name="Shinozaki K."/>
        </authorList>
    </citation>
    <scope>NUCLEOTIDE SEQUENCE [LARGE SCALE MRNA]</scope>
    <source>
        <strain>cv. Columbia</strain>
    </source>
</reference>
<reference key="4">
    <citation type="journal article" date="2003" name="Plant J.">
        <title>Protein interaction analysis of SCF ubiquitin E3 ligase subunits from Arabidopsis.</title>
        <authorList>
            <person name="Risseeuw E.P."/>
            <person name="Daskalchuk T.E."/>
            <person name="Banks T.W."/>
            <person name="Liu E."/>
            <person name="Cotelesage J."/>
            <person name="Hellmann H."/>
            <person name="Estelle M."/>
            <person name="Somers D.E."/>
            <person name="Crosby W.L."/>
        </authorList>
    </citation>
    <scope>INTERACTION WITH SPK1B/ASK2</scope>
</reference>
<sequence length="479" mass="53680">MDPPTQSHNSVRTVPGSNHSHTDLIISSFLSFPDSSPISISNSFDRVLDRALASASADESVQDRLVDRTLELASLLLDSTRRCFRKRASVHNSNSWSLPPELTIKVFSMLDTKSMMQAAVCCTMFNKCAMDRLCYSHIDLTTSARYADKGVVSTMINRAGKELRSLKLGRVVRTAGSDSAAPLLSGSCLSPLAYNHGFLGSRLRSLRLYNLRPIKYRSLCDALSVCPNITDLRIVGLYNLTEELFNSLTKKCRLIEHLFLETYGYPRTLESKAGSSLVEFVTNCPNLTSLTLIRFGLTDDWARNLAESCRKLKYLNLSRSPTIKGRFLRELGLSCKENLLKTLILRSCPKLQEKEVLEFCNSLLTGNFKSIRQIDVSSNSGLASSDRGKRCNKPNFPLERLKEERSDVTFVADFPSTSSGKRYGVCDEEELRLIEMMEAEDDEVDEEDDSDDDTDDVSDEDESENDDDMGMGFDVDYLL</sequence>